<sequence length="87" mass="10195">MDKARKLELIKKFGRSEGDTGSPEVQVALLTERIQSLTEHLKVHKKDHHSRRGLLMMVGQRRGLLNYLSDQDIERYRTLIKELGLRR</sequence>
<comment type="function">
    <text evidence="1">One of the primary rRNA binding proteins, it binds directly to 16S rRNA where it helps nucleate assembly of the platform of the 30S subunit by binding and bridging several RNA helices of the 16S rRNA.</text>
</comment>
<comment type="function">
    <text evidence="1">Forms an intersubunit bridge (bridge B4) with the 23S rRNA of the 50S subunit in the ribosome.</text>
</comment>
<comment type="subunit">
    <text evidence="1">Part of the 30S ribosomal subunit. Forms a bridge to the 50S subunit in the 70S ribosome, contacting the 23S rRNA.</text>
</comment>
<comment type="similarity">
    <text evidence="1">Belongs to the universal ribosomal protein uS15 family.</text>
</comment>
<proteinExistence type="inferred from homology"/>
<evidence type="ECO:0000255" key="1">
    <source>
        <dbReference type="HAMAP-Rule" id="MF_01343"/>
    </source>
</evidence>
<evidence type="ECO:0000305" key="2"/>
<dbReference type="EMBL" id="CP000721">
    <property type="protein sequence ID" value="ABR33389.1"/>
    <property type="molecule type" value="Genomic_DNA"/>
</dbReference>
<dbReference type="RefSeq" id="WP_011968544.1">
    <property type="nucleotide sequence ID" value="NC_009617.1"/>
</dbReference>
<dbReference type="SMR" id="A6LSQ9"/>
<dbReference type="GeneID" id="66344197"/>
<dbReference type="KEGG" id="cbe:Cbei_1207"/>
<dbReference type="eggNOG" id="COG0184">
    <property type="taxonomic scope" value="Bacteria"/>
</dbReference>
<dbReference type="HOGENOM" id="CLU_148518_0_0_9"/>
<dbReference type="Proteomes" id="UP000000565">
    <property type="component" value="Chromosome"/>
</dbReference>
<dbReference type="GO" id="GO:0022627">
    <property type="term" value="C:cytosolic small ribosomal subunit"/>
    <property type="evidence" value="ECO:0007669"/>
    <property type="project" value="TreeGrafter"/>
</dbReference>
<dbReference type="GO" id="GO:0019843">
    <property type="term" value="F:rRNA binding"/>
    <property type="evidence" value="ECO:0007669"/>
    <property type="project" value="UniProtKB-UniRule"/>
</dbReference>
<dbReference type="GO" id="GO:0003735">
    <property type="term" value="F:structural constituent of ribosome"/>
    <property type="evidence" value="ECO:0007669"/>
    <property type="project" value="InterPro"/>
</dbReference>
<dbReference type="GO" id="GO:0006412">
    <property type="term" value="P:translation"/>
    <property type="evidence" value="ECO:0007669"/>
    <property type="project" value="UniProtKB-UniRule"/>
</dbReference>
<dbReference type="CDD" id="cd00353">
    <property type="entry name" value="Ribosomal_S15p_S13e"/>
    <property type="match status" value="1"/>
</dbReference>
<dbReference type="FunFam" id="1.10.287.10:FF:000002">
    <property type="entry name" value="30S ribosomal protein S15"/>
    <property type="match status" value="1"/>
</dbReference>
<dbReference type="Gene3D" id="6.10.250.3130">
    <property type="match status" value="1"/>
</dbReference>
<dbReference type="Gene3D" id="1.10.287.10">
    <property type="entry name" value="S15/NS1, RNA-binding"/>
    <property type="match status" value="1"/>
</dbReference>
<dbReference type="HAMAP" id="MF_01343_B">
    <property type="entry name" value="Ribosomal_uS15_B"/>
    <property type="match status" value="1"/>
</dbReference>
<dbReference type="InterPro" id="IPR000589">
    <property type="entry name" value="Ribosomal_uS15"/>
</dbReference>
<dbReference type="InterPro" id="IPR005290">
    <property type="entry name" value="Ribosomal_uS15_bac-type"/>
</dbReference>
<dbReference type="InterPro" id="IPR009068">
    <property type="entry name" value="uS15_NS1_RNA-bd_sf"/>
</dbReference>
<dbReference type="NCBIfam" id="TIGR00952">
    <property type="entry name" value="S15_bact"/>
    <property type="match status" value="1"/>
</dbReference>
<dbReference type="PANTHER" id="PTHR23321">
    <property type="entry name" value="RIBOSOMAL PROTEIN S15, BACTERIAL AND ORGANELLAR"/>
    <property type="match status" value="1"/>
</dbReference>
<dbReference type="PANTHER" id="PTHR23321:SF26">
    <property type="entry name" value="SMALL RIBOSOMAL SUBUNIT PROTEIN US15M"/>
    <property type="match status" value="1"/>
</dbReference>
<dbReference type="Pfam" id="PF00312">
    <property type="entry name" value="Ribosomal_S15"/>
    <property type="match status" value="1"/>
</dbReference>
<dbReference type="SMART" id="SM01387">
    <property type="entry name" value="Ribosomal_S15"/>
    <property type="match status" value="1"/>
</dbReference>
<dbReference type="SUPFAM" id="SSF47060">
    <property type="entry name" value="S15/NS1 RNA-binding domain"/>
    <property type="match status" value="1"/>
</dbReference>
<dbReference type="PROSITE" id="PS00362">
    <property type="entry name" value="RIBOSOMAL_S15"/>
    <property type="match status" value="1"/>
</dbReference>
<protein>
    <recommendedName>
        <fullName evidence="1">Small ribosomal subunit protein uS15</fullName>
    </recommendedName>
    <alternativeName>
        <fullName evidence="2">30S ribosomal protein S15</fullName>
    </alternativeName>
</protein>
<name>RS15_CLOB8</name>
<keyword id="KW-0687">Ribonucleoprotein</keyword>
<keyword id="KW-0689">Ribosomal protein</keyword>
<keyword id="KW-0694">RNA-binding</keyword>
<keyword id="KW-0699">rRNA-binding</keyword>
<gene>
    <name evidence="1" type="primary">rpsO</name>
    <name type="ordered locus">Cbei_1207</name>
</gene>
<organism>
    <name type="scientific">Clostridium beijerinckii (strain ATCC 51743 / NCIMB 8052)</name>
    <name type="common">Clostridium acetobutylicum</name>
    <dbReference type="NCBI Taxonomy" id="290402"/>
    <lineage>
        <taxon>Bacteria</taxon>
        <taxon>Bacillati</taxon>
        <taxon>Bacillota</taxon>
        <taxon>Clostridia</taxon>
        <taxon>Eubacteriales</taxon>
        <taxon>Clostridiaceae</taxon>
        <taxon>Clostridium</taxon>
    </lineage>
</organism>
<reference key="1">
    <citation type="submission" date="2007-06" db="EMBL/GenBank/DDBJ databases">
        <title>Complete sequence of Clostridium beijerinckii NCIMB 8052.</title>
        <authorList>
            <consortium name="US DOE Joint Genome Institute"/>
            <person name="Copeland A."/>
            <person name="Lucas S."/>
            <person name="Lapidus A."/>
            <person name="Barry K."/>
            <person name="Detter J.C."/>
            <person name="Glavina del Rio T."/>
            <person name="Hammon N."/>
            <person name="Israni S."/>
            <person name="Dalin E."/>
            <person name="Tice H."/>
            <person name="Pitluck S."/>
            <person name="Sims D."/>
            <person name="Brettin T."/>
            <person name="Bruce D."/>
            <person name="Tapia R."/>
            <person name="Brainard J."/>
            <person name="Schmutz J."/>
            <person name="Larimer F."/>
            <person name="Land M."/>
            <person name="Hauser L."/>
            <person name="Kyrpides N."/>
            <person name="Mikhailova N."/>
            <person name="Bennet G."/>
            <person name="Cann I."/>
            <person name="Chen J.-S."/>
            <person name="Contreras A.L."/>
            <person name="Jones D."/>
            <person name="Kashket E."/>
            <person name="Mitchell W."/>
            <person name="Stoddard S."/>
            <person name="Schwarz W."/>
            <person name="Qureshi N."/>
            <person name="Young M."/>
            <person name="Shi Z."/>
            <person name="Ezeji T."/>
            <person name="White B."/>
            <person name="Blaschek H."/>
            <person name="Richardson P."/>
        </authorList>
    </citation>
    <scope>NUCLEOTIDE SEQUENCE [LARGE SCALE GENOMIC DNA]</scope>
    <source>
        <strain>ATCC 51743 / NCIMB 8052</strain>
    </source>
</reference>
<feature type="chain" id="PRO_0000354181" description="Small ribosomal subunit protein uS15">
    <location>
        <begin position="1"/>
        <end position="87"/>
    </location>
</feature>
<accession>A6LSQ9</accession>